<gene>
    <name evidence="5" type="primary">sluh-7</name>
    <name evidence="5" type="ORF">K07C5.6</name>
</gene>
<organism>
    <name type="scientific">Caenorhabditis elegans</name>
    <dbReference type="NCBI Taxonomy" id="6239"/>
    <lineage>
        <taxon>Eukaryota</taxon>
        <taxon>Metazoa</taxon>
        <taxon>Ecdysozoa</taxon>
        <taxon>Nematoda</taxon>
        <taxon>Chromadorea</taxon>
        <taxon>Rhabditida</taxon>
        <taxon>Rhabditina</taxon>
        <taxon>Rhabditomorpha</taxon>
        <taxon>Rhabditoidea</taxon>
        <taxon>Rhabditidae</taxon>
        <taxon>Peloderinae</taxon>
        <taxon>Caenorhabditis</taxon>
    </lineage>
</organism>
<sequence length="647" mass="74461">MASYKQNLPPSALIKQQVNVADKKSKAEVQRDRQLEEDRKAGTAPAMVDVQTGRDINPHIPMFISQNPWYVPSEGPTLKHQRPHEEREKKMTQIHEWYQKGTTGKSATKFRKGACENCGAMGHQKRDCFDRPRKSNAKETNDNIAEDDYVQPNLTLGFDAKRDRWNGYDPSTHKQVIEDYEHLEEARKVVREHEMKEGEVEPATTEDGAPKDEDMYAEDADMAGVSVDMDSRTRITVRNLRIREDTAKYLYNLAENSPYYDPKSRSMRENPFAGVAGKELEAARFSGDNFVRYSGEVTAANEAQVFAWQATRGGVYAHSIAEPTKLEALKKEYEKEKSTLKNETQKELLDKYGGGEHMERPADELLLAQTESYIEYNRKGKVIKGKEKVAISSRFKEDIYPQNHTSVFGSFWREGRWGYKCCHQFVKNSYCTGKQGIEAETSAAKGTTTSNEEIFKVPKLVEKTEVKEEKEKEDSIKDEVAEENSDNDNDEEKEKVSEKSISPSPPSDDEEKEKEREKERLIEKERRERDQRRRDKKREKRERKKAKLGKRKRRHRDSDDESDPSSGSGSESDSDEEMRKAMKKAKREKAEGMKAAREGDRGRKYNTDYSNTAPNEKEMEAYRVTSVHSADPMAAYMNSKFEKKHTK</sequence>
<evidence type="ECO:0000250" key="1"/>
<evidence type="ECO:0000255" key="2">
    <source>
        <dbReference type="PROSITE-ProRule" id="PRU00047"/>
    </source>
</evidence>
<evidence type="ECO:0000256" key="3">
    <source>
        <dbReference type="SAM" id="MobiDB-lite"/>
    </source>
</evidence>
<evidence type="ECO:0000305" key="4"/>
<evidence type="ECO:0000312" key="5">
    <source>
        <dbReference type="WormBase" id="K07C5.6"/>
    </source>
</evidence>
<proteinExistence type="inferred from homology"/>
<reference key="1">
    <citation type="journal article" date="1998" name="Science">
        <title>Genome sequence of the nematode C. elegans: a platform for investigating biology.</title>
        <authorList>
            <consortium name="The C. elegans sequencing consortium"/>
        </authorList>
    </citation>
    <scope>NUCLEOTIDE SEQUENCE [LARGE SCALE GENOMIC DNA]</scope>
    <source>
        <strain>Bristol N2</strain>
    </source>
</reference>
<dbReference type="EMBL" id="Z71181">
    <property type="protein sequence ID" value="CAA94899.1"/>
    <property type="molecule type" value="Genomic_DNA"/>
</dbReference>
<dbReference type="PIR" id="T23407">
    <property type="entry name" value="T23407"/>
</dbReference>
<dbReference type="SMR" id="Q21278"/>
<dbReference type="BioGRID" id="44473">
    <property type="interactions" value="3"/>
</dbReference>
<dbReference type="FunCoup" id="Q21278">
    <property type="interactions" value="3248"/>
</dbReference>
<dbReference type="STRING" id="6239.K07C5.6.1"/>
<dbReference type="iPTMnet" id="Q21278"/>
<dbReference type="PaxDb" id="6239-K07C5.6"/>
<dbReference type="PeptideAtlas" id="Q21278"/>
<dbReference type="EnsemblMetazoa" id="K07C5.6.1">
    <property type="protein sequence ID" value="K07C5.6.1"/>
    <property type="gene ID" value="WBGene00010629"/>
</dbReference>
<dbReference type="KEGG" id="cel:CELE_K07C5.6"/>
<dbReference type="UCSC" id="K07C5.6.1">
    <property type="organism name" value="c. elegans"/>
</dbReference>
<dbReference type="AGR" id="WB:WBGene00010629"/>
<dbReference type="CTD" id="179443"/>
<dbReference type="WormBase" id="K07C5.6">
    <property type="protein sequence ID" value="CE06116"/>
    <property type="gene ID" value="WBGene00010629"/>
    <property type="gene designation" value="sluh-7"/>
</dbReference>
<dbReference type="eggNOG" id="KOG2560">
    <property type="taxonomic scope" value="Eukaryota"/>
</dbReference>
<dbReference type="GeneTree" id="ENSGT00390000002292"/>
<dbReference type="HOGENOM" id="CLU_019317_2_0_1"/>
<dbReference type="InParanoid" id="Q21278"/>
<dbReference type="OMA" id="KYAWESQ"/>
<dbReference type="OrthoDB" id="249612at2759"/>
<dbReference type="PhylomeDB" id="Q21278"/>
<dbReference type="Reactome" id="R-CEL-159236">
    <property type="pathway name" value="Transport of Mature mRNA derived from an Intron-Containing Transcript"/>
</dbReference>
<dbReference type="Reactome" id="R-CEL-72163">
    <property type="pathway name" value="mRNA Splicing - Major Pathway"/>
</dbReference>
<dbReference type="Reactome" id="R-CEL-72187">
    <property type="pathway name" value="mRNA 3'-end processing"/>
</dbReference>
<dbReference type="Reactome" id="R-CEL-73856">
    <property type="pathway name" value="RNA Polymerase II Transcription Termination"/>
</dbReference>
<dbReference type="PRO" id="PR:Q21278"/>
<dbReference type="Proteomes" id="UP000001940">
    <property type="component" value="Chromosome V"/>
</dbReference>
<dbReference type="Bgee" id="WBGene00010629">
    <property type="expression patterns" value="Expressed in adult organism and 4 other cell types or tissues"/>
</dbReference>
<dbReference type="GO" id="GO:0005737">
    <property type="term" value="C:cytoplasm"/>
    <property type="evidence" value="ECO:0007669"/>
    <property type="project" value="UniProtKB-ARBA"/>
</dbReference>
<dbReference type="GO" id="GO:0005681">
    <property type="term" value="C:spliceosomal complex"/>
    <property type="evidence" value="ECO:0000318"/>
    <property type="project" value="GO_Central"/>
</dbReference>
<dbReference type="GO" id="GO:0019899">
    <property type="term" value="F:enzyme binding"/>
    <property type="evidence" value="ECO:0007669"/>
    <property type="project" value="UniProtKB-ARBA"/>
</dbReference>
<dbReference type="GO" id="GO:0030628">
    <property type="term" value="F:pre-mRNA 3'-splice site binding"/>
    <property type="evidence" value="ECO:0007669"/>
    <property type="project" value="InterPro"/>
</dbReference>
<dbReference type="GO" id="GO:0008270">
    <property type="term" value="F:zinc ion binding"/>
    <property type="evidence" value="ECO:0007669"/>
    <property type="project" value="UniProtKB-KW"/>
</dbReference>
<dbReference type="GO" id="GO:0000398">
    <property type="term" value="P:mRNA splicing, via spliceosome"/>
    <property type="evidence" value="ECO:0007669"/>
    <property type="project" value="InterPro"/>
</dbReference>
<dbReference type="GO" id="GO:0008380">
    <property type="term" value="P:RNA splicing"/>
    <property type="evidence" value="ECO:0000318"/>
    <property type="project" value="GO_Central"/>
</dbReference>
<dbReference type="InterPro" id="IPR021715">
    <property type="entry name" value="Slu7_dom"/>
</dbReference>
<dbReference type="InterPro" id="IPR039974">
    <property type="entry name" value="Splicing_factor_SLU7"/>
</dbReference>
<dbReference type="InterPro" id="IPR001878">
    <property type="entry name" value="Znf_CCHC"/>
</dbReference>
<dbReference type="InterPro" id="IPR036875">
    <property type="entry name" value="Znf_CCHC_sf"/>
</dbReference>
<dbReference type="PANTHER" id="PTHR12942:SF2">
    <property type="entry name" value="PRE-MRNA-SPLICING FACTOR SLU7"/>
    <property type="match status" value="1"/>
</dbReference>
<dbReference type="PANTHER" id="PTHR12942">
    <property type="entry name" value="STEP II SPLICING FACTOR SLU7"/>
    <property type="match status" value="1"/>
</dbReference>
<dbReference type="Pfam" id="PF11708">
    <property type="entry name" value="Slu7"/>
    <property type="match status" value="1"/>
</dbReference>
<dbReference type="Pfam" id="PF00098">
    <property type="entry name" value="zf-CCHC"/>
    <property type="match status" value="1"/>
</dbReference>
<dbReference type="SUPFAM" id="SSF57756">
    <property type="entry name" value="Retrovirus zinc finger-like domains"/>
    <property type="match status" value="1"/>
</dbReference>
<dbReference type="PROSITE" id="PS50158">
    <property type="entry name" value="ZF_CCHC"/>
    <property type="match status" value="1"/>
</dbReference>
<feature type="chain" id="PRO_0000289201" description="Pre-mRNA-splicing factor SLU7">
    <location>
        <begin position="1"/>
        <end position="647"/>
    </location>
</feature>
<feature type="zinc finger region" description="CCHC-type" evidence="2">
    <location>
        <begin position="113"/>
        <end position="130"/>
    </location>
</feature>
<feature type="region of interest" description="Disordered" evidence="3">
    <location>
        <begin position="1"/>
        <end position="44"/>
    </location>
</feature>
<feature type="region of interest" description="Disordered" evidence="3">
    <location>
        <begin position="193"/>
        <end position="212"/>
    </location>
</feature>
<feature type="region of interest" description="Disordered" evidence="3">
    <location>
        <begin position="465"/>
        <end position="620"/>
    </location>
</feature>
<feature type="compositionally biased region" description="Polar residues" evidence="3">
    <location>
        <begin position="1"/>
        <end position="19"/>
    </location>
</feature>
<feature type="compositionally biased region" description="Basic and acidic residues" evidence="3">
    <location>
        <begin position="21"/>
        <end position="41"/>
    </location>
</feature>
<feature type="compositionally biased region" description="Basic and acidic residues" evidence="3">
    <location>
        <begin position="465"/>
        <end position="479"/>
    </location>
</feature>
<feature type="compositionally biased region" description="Acidic residues" evidence="3">
    <location>
        <begin position="480"/>
        <end position="491"/>
    </location>
</feature>
<feature type="compositionally biased region" description="Basic and acidic residues" evidence="3">
    <location>
        <begin position="513"/>
        <end position="533"/>
    </location>
</feature>
<feature type="compositionally biased region" description="Basic residues" evidence="3">
    <location>
        <begin position="534"/>
        <end position="555"/>
    </location>
</feature>
<feature type="compositionally biased region" description="Basic and acidic residues" evidence="3">
    <location>
        <begin position="588"/>
        <end position="606"/>
    </location>
</feature>
<name>SLU7_CAEEL</name>
<protein>
    <recommendedName>
        <fullName>Pre-mRNA-splicing factor SLU7</fullName>
    </recommendedName>
</protein>
<accession>Q21278</accession>
<keyword id="KW-0479">Metal-binding</keyword>
<keyword id="KW-0507">mRNA processing</keyword>
<keyword id="KW-0508">mRNA splicing</keyword>
<keyword id="KW-0539">Nucleus</keyword>
<keyword id="KW-1185">Reference proteome</keyword>
<keyword id="KW-0747">Spliceosome</keyword>
<keyword id="KW-0862">Zinc</keyword>
<keyword id="KW-0863">Zinc-finger</keyword>
<comment type="function">
    <text evidence="1">Participates in the second catalytic step of pre-mRNA splicing, when the free hydroxyl group of exon I attacks the 3'-splice site to generate spliced mRNA and the excised lariat intron.</text>
</comment>
<comment type="subcellular location">
    <subcellularLocation>
        <location evidence="1">Nucleus</location>
    </subcellularLocation>
</comment>
<comment type="similarity">
    <text evidence="4">Belongs to the SLU7 family.</text>
</comment>